<evidence type="ECO:0000269" key="1">
    <source>
    </source>
</evidence>
<evidence type="ECO:0000305" key="2"/>
<protein>
    <recommendedName>
        <fullName>TATA-box-binding protein 1</fullName>
        <shortName>EhTBP</shortName>
    </recommendedName>
    <alternativeName>
        <fullName>TATA sequence-binding protein</fullName>
    </alternativeName>
    <alternativeName>
        <fullName>TATA-binding factor</fullName>
    </alternativeName>
    <alternativeName>
        <fullName>TATA-box factor</fullName>
    </alternativeName>
    <alternativeName>
        <fullName>Transcription initiation factor TFIID TBP subunit</fullName>
    </alternativeName>
</protein>
<dbReference type="EMBL" id="Z48307">
    <property type="protein sequence ID" value="CAA88304.1"/>
    <property type="molecule type" value="Genomic_DNA"/>
</dbReference>
<dbReference type="EMBL" id="DS571521">
    <property type="protein sequence ID" value="EDS88986.1"/>
    <property type="molecule type" value="Genomic_DNA"/>
</dbReference>
<dbReference type="RefSeq" id="XP_001914239.1">
    <property type="nucleotide sequence ID" value="XM_001914204.1"/>
</dbReference>
<dbReference type="SMR" id="P52653"/>
<dbReference type="FunCoup" id="P52653">
    <property type="interactions" value="588"/>
</dbReference>
<dbReference type="STRING" id="5759.P52653"/>
<dbReference type="GeneID" id="6220268"/>
<dbReference type="KEGG" id="ehi:EHI_020610"/>
<dbReference type="VEuPathDB" id="AmoebaDB:EHI5A_043810"/>
<dbReference type="VEuPathDB" id="AmoebaDB:EHI7A_023660"/>
<dbReference type="VEuPathDB" id="AmoebaDB:EHI8A_114190"/>
<dbReference type="VEuPathDB" id="AmoebaDB:EHI_020610"/>
<dbReference type="VEuPathDB" id="AmoebaDB:KM1_049680"/>
<dbReference type="eggNOG" id="KOG3302">
    <property type="taxonomic scope" value="Eukaryota"/>
</dbReference>
<dbReference type="InParanoid" id="P52653"/>
<dbReference type="OMA" id="VRFHIRL"/>
<dbReference type="OrthoDB" id="2127950at2759"/>
<dbReference type="Proteomes" id="UP000001926">
    <property type="component" value="Partially assembled WGS sequence"/>
</dbReference>
<dbReference type="GO" id="GO:0005669">
    <property type="term" value="C:transcription factor TFIID complex"/>
    <property type="evidence" value="ECO:0000305"/>
    <property type="project" value="UniProtKB"/>
</dbReference>
<dbReference type="GO" id="GO:0003677">
    <property type="term" value="F:DNA binding"/>
    <property type="evidence" value="ECO:0000314"/>
    <property type="project" value="UniProtKB"/>
</dbReference>
<dbReference type="GO" id="GO:0016251">
    <property type="term" value="F:RNA polymerase II general transcription initiation factor activity"/>
    <property type="evidence" value="ECO:0000318"/>
    <property type="project" value="GO_Central"/>
</dbReference>
<dbReference type="GO" id="GO:0006352">
    <property type="term" value="P:DNA-templated transcription initiation"/>
    <property type="evidence" value="ECO:0000318"/>
    <property type="project" value="GO_Central"/>
</dbReference>
<dbReference type="GO" id="GO:0060261">
    <property type="term" value="P:positive regulation of transcription initiation by RNA polymerase II"/>
    <property type="evidence" value="ECO:0000314"/>
    <property type="project" value="UniProtKB"/>
</dbReference>
<dbReference type="GO" id="GO:0006366">
    <property type="term" value="P:transcription by RNA polymerase II"/>
    <property type="evidence" value="ECO:0000314"/>
    <property type="project" value="UniProtKB"/>
</dbReference>
<dbReference type="CDD" id="cd04516">
    <property type="entry name" value="TBP_eukaryotes"/>
    <property type="match status" value="1"/>
</dbReference>
<dbReference type="FunFam" id="3.30.310.10:FF:000005">
    <property type="entry name" value="TATA box-binding protein-like 1"/>
    <property type="match status" value="1"/>
</dbReference>
<dbReference type="FunFam" id="3.30.310.10:FF:000002">
    <property type="entry name" value="TATA-box-binding protein 2"/>
    <property type="match status" value="1"/>
</dbReference>
<dbReference type="Gene3D" id="3.30.310.10">
    <property type="entry name" value="TATA-Binding Protein"/>
    <property type="match status" value="2"/>
</dbReference>
<dbReference type="HAMAP" id="MF_00408">
    <property type="entry name" value="TATA_bind_prot_arch"/>
    <property type="match status" value="1"/>
</dbReference>
<dbReference type="InterPro" id="IPR000814">
    <property type="entry name" value="TBP"/>
</dbReference>
<dbReference type="InterPro" id="IPR030491">
    <property type="entry name" value="TBP_CS"/>
</dbReference>
<dbReference type="InterPro" id="IPR012295">
    <property type="entry name" value="TBP_dom_sf"/>
</dbReference>
<dbReference type="InterPro" id="IPR033710">
    <property type="entry name" value="TBP_eukaryotic"/>
</dbReference>
<dbReference type="PANTHER" id="PTHR10126">
    <property type="entry name" value="TATA-BOX BINDING PROTEIN"/>
    <property type="match status" value="1"/>
</dbReference>
<dbReference type="Pfam" id="PF00352">
    <property type="entry name" value="TBP"/>
    <property type="match status" value="2"/>
</dbReference>
<dbReference type="PRINTS" id="PR00686">
    <property type="entry name" value="TIFACTORIID"/>
</dbReference>
<dbReference type="SUPFAM" id="SSF55945">
    <property type="entry name" value="TATA-box binding protein-like"/>
    <property type="match status" value="2"/>
</dbReference>
<dbReference type="PROSITE" id="PS00351">
    <property type="entry name" value="TFIID"/>
    <property type="match status" value="1"/>
</dbReference>
<organism>
    <name type="scientific">Entamoeba histolytica (strain ATCC 30459 / HM-1:IMSS / ABRM)</name>
    <dbReference type="NCBI Taxonomy" id="294381"/>
    <lineage>
        <taxon>Eukaryota</taxon>
        <taxon>Amoebozoa</taxon>
        <taxon>Evosea</taxon>
        <taxon>Archamoebae</taxon>
        <taxon>Mastigamoebida</taxon>
        <taxon>Entamoebidae</taxon>
        <taxon>Entamoeba</taxon>
    </lineage>
</organism>
<keyword id="KW-0238">DNA-binding</keyword>
<keyword id="KW-0539">Nucleus</keyword>
<keyword id="KW-1185">Reference proteome</keyword>
<keyword id="KW-0677">Repeat</keyword>
<keyword id="KW-0804">Transcription</keyword>
<keyword id="KW-0805">Transcription regulation</keyword>
<proteinExistence type="inferred from homology"/>
<sequence length="234" mass="25967">MSTPGDFSLSPFILGGAVDPRSMSQLGNICHADYMSTSTESQERSLNNPNDTHPEIVNVVSTFQLGVKLELRKIVQKARNAEYNPKRFAGAIMRISSPKSTALIFQTGKIVCTGTRSIEESKIASKKYAKIIKKIGYPIHYSNFNVQNIVGSCDVKFQIALRTLVDSYLAFCQYEPEVFPGLVYRMASPKVTLLVFSTGKVVLTGAKDEESLNLAYKNIYPILLANRKEDISNQ</sequence>
<name>TBP1_ENTH1</name>
<feature type="chain" id="PRO_0000153972" description="TATA-box-binding protein 1">
    <location>
        <begin position="1"/>
        <end position="234"/>
    </location>
</feature>
<feature type="repeat" description="1">
    <location>
        <begin position="52"/>
        <end position="136"/>
    </location>
</feature>
<feature type="repeat" description="2">
    <location>
        <begin position="142"/>
        <end position="223"/>
    </location>
</feature>
<comment type="function">
    <text evidence="1">General transcription factor that functions at the core of the DNA-binding multiprotein factor TFIID. Binding of TFIID to the TATA box is the initial transcriptional step of the pre-initiation complex (PIC), playing a role in the activation of eukaryotic genes transcribed by RNA polymerase II.</text>
</comment>
<comment type="subunit">
    <text>Belongs to the TFIID complex together with the TBP-associated factors (TAFs). Binds DNA as monomer.</text>
</comment>
<comment type="subcellular location">
    <subcellularLocation>
        <location>Nucleus</location>
    </subcellularLocation>
</comment>
<comment type="similarity">
    <text evidence="2">Belongs to the TBP family.</text>
</comment>
<reference key="1">
    <citation type="journal article" date="1997" name="Arch. Med. Res.">
        <title>Comparison of the Entamoeba histolytica TATA-binding protein (TBP) structure with other TBP.</title>
        <authorList>
            <person name="Hernandez R."/>
            <person name="Luna-Arias J.P."/>
            <person name="Orozco E."/>
        </authorList>
    </citation>
    <scope>NUCLEOTIDE SEQUENCE [GENOMIC DNA]</scope>
    <source>
        <strain>ATCC 30459 / HM-1:IMSS / ABRM</strain>
    </source>
</reference>
<reference key="2">
    <citation type="journal article" date="2005" name="Nature">
        <title>The genome of the protist parasite Entamoeba histolytica.</title>
        <authorList>
            <person name="Loftus B.J."/>
            <person name="Anderson I."/>
            <person name="Davies R."/>
            <person name="Alsmark U.C."/>
            <person name="Samuelson J."/>
            <person name="Amedeo P."/>
            <person name="Roncaglia P."/>
            <person name="Berriman M."/>
            <person name="Hirt R.P."/>
            <person name="Mann B.J."/>
            <person name="Nozaki T."/>
            <person name="Suh B."/>
            <person name="Pop M."/>
            <person name="Duchene M."/>
            <person name="Ackers J."/>
            <person name="Tannich E."/>
            <person name="Leippe M."/>
            <person name="Hofer M."/>
            <person name="Bruchhaus I."/>
            <person name="Willhoeft U."/>
            <person name="Bhattacharya A."/>
            <person name="Chillingworth T."/>
            <person name="Churcher C.M."/>
            <person name="Hance Z."/>
            <person name="Harris B."/>
            <person name="Harris D."/>
            <person name="Jagels K."/>
            <person name="Moule S."/>
            <person name="Mungall K.L."/>
            <person name="Ormond D."/>
            <person name="Squares R."/>
            <person name="Whitehead S."/>
            <person name="Quail M.A."/>
            <person name="Rabbinowitsch E."/>
            <person name="Norbertczak H."/>
            <person name="Price C."/>
            <person name="Wang Z."/>
            <person name="Guillen N."/>
            <person name="Gilchrist C."/>
            <person name="Stroup S.E."/>
            <person name="Bhattacharya S."/>
            <person name="Lohia A."/>
            <person name="Foster P.G."/>
            <person name="Sicheritz-Ponten T."/>
            <person name="Weber C."/>
            <person name="Singh U."/>
            <person name="Mukherjee C."/>
            <person name="El-Sayed N.M.A."/>
            <person name="Petri W.A."/>
            <person name="Clark C.G."/>
            <person name="Embley T.M."/>
            <person name="Barrell B.G."/>
            <person name="Fraser C.M."/>
            <person name="Hall N."/>
        </authorList>
    </citation>
    <scope>NUCLEOTIDE SEQUENCE [LARGE SCALE GENOMIC DNA]</scope>
    <source>
        <strain>ATCC 30459 / HM-1:IMSS / ABRM</strain>
    </source>
</reference>
<reference key="3">
    <citation type="journal article" date="2010" name="PLoS Negl. Trop. Dis.">
        <title>New assembly, reannotation and analysis of the Entamoeba histolytica genome reveal new genomic features and protein content information.</title>
        <authorList>
            <person name="Lorenzi H.A."/>
            <person name="Puiu D."/>
            <person name="Miller J.R."/>
            <person name="Brinkac L.M."/>
            <person name="Amedeo P."/>
            <person name="Hall N."/>
            <person name="Caler E.V."/>
        </authorList>
    </citation>
    <scope>GENOME REANNOTATION</scope>
    <source>
        <strain>ATCC 30459 / HM-1:IMSS / ABRM</strain>
    </source>
</reference>
<reference key="4">
    <citation type="journal article" date="2010" name="Protein Expr. Purif.">
        <title>Entamoeba histolytica: a unicellular organism containing two active genes encoding for members of the TBP family.</title>
        <authorList>
            <person name="Castanon-Sanchez C.A."/>
            <person name="Luna-Arias J.P."/>
            <person name="de Dios-Bravo M.G."/>
            <person name="Herrera-Aguirre M.E."/>
            <person name="Olivares-Trejo J.J."/>
            <person name="Orozco E."/>
            <person name="Hernandez J.M."/>
        </authorList>
    </citation>
    <scope>FUNCTION</scope>
</reference>
<accession>P52653</accession>
<accession>B1N4X3</accession>
<gene>
    <name type="primary">TBP</name>
    <name type="ORF">EHI_020610</name>
</gene>